<reference key="1">
    <citation type="journal article" date="2007" name="Proc. Natl. Acad. Sci. U.S.A.">
        <title>The tiny eukaryote Ostreococcus provides genomic insights into the paradox of plankton speciation.</title>
        <authorList>
            <person name="Palenik B."/>
            <person name="Grimwood J."/>
            <person name="Aerts A."/>
            <person name="Rouze P."/>
            <person name="Salamov A."/>
            <person name="Putnam N."/>
            <person name="Dupont C."/>
            <person name="Jorgensen R."/>
            <person name="Derelle E."/>
            <person name="Rombauts S."/>
            <person name="Zhou K."/>
            <person name="Otillar R."/>
            <person name="Merchant S.S."/>
            <person name="Podell S."/>
            <person name="Gaasterland T."/>
            <person name="Napoli C."/>
            <person name="Gendler K."/>
            <person name="Manuell A."/>
            <person name="Tai V."/>
            <person name="Vallon O."/>
            <person name="Piganeau G."/>
            <person name="Jancek S."/>
            <person name="Heijde M."/>
            <person name="Jabbari K."/>
            <person name="Bowler C."/>
            <person name="Lohr M."/>
            <person name="Robbens S."/>
            <person name="Werner G."/>
            <person name="Dubchak I."/>
            <person name="Pazour G.J."/>
            <person name="Ren Q."/>
            <person name="Paulsen I."/>
            <person name="Delwiche C."/>
            <person name="Schmutz J."/>
            <person name="Rokhsar D."/>
            <person name="Van de Peer Y."/>
            <person name="Moreau H."/>
            <person name="Grigoriev I.V."/>
        </authorList>
    </citation>
    <scope>NUCLEOTIDE SEQUENCE [LARGE SCALE GENOMIC DNA]</scope>
    <source>
        <strain>CCE9901</strain>
    </source>
</reference>
<gene>
    <name evidence="4" type="primary">secA</name>
    <name evidence="5" type="ORF">OSTLU_36933</name>
</gene>
<proteinExistence type="inferred from homology"/>
<accession>A4RW83</accession>
<sequence length="932" mass="105089">MLKGDPSEKTKKRYQARVDAVNALGARTKALSDDELRAKTEEFRERLRRGESEDDLLVEAFAVVREAADRVLGLRPFDVQLIGGMILHEGQIAEMRTGEGKTLVSALPAYLNALSGKGVHVVTVNDYLARRDAEWIGQIHKFLGMTCGLIQAGMAEEERRVGYGSDVTYVTNSELGFDYLRDNLAQNTGELVQRDFNFCIIDEVDSILIDEARTPLIISGVADKPSERYIQAAKIADAFEKDYHYKVDEKQKSVLLSEEGYEAAEDLLQVTDLYDPRTQWALYIINAIKAKELQKRDVNYIVRGQEIIIVDEFSGRTMQGRRWSDGLHQAVEAKEGVTIQNETVTIASVTYQAFFKSYPKLGGMTGTAETEITEFSNIYELEVAVVPTNRPVSREDSTDVVFRSETGKWNAVRKEISRMHKKGRPVLVGTTSVERSEQIAELLDEDGIPYELLNAKPENVERESEIVAQSGRKGAVTIATNMAGRGTDILLGGNAEFMARLRVRESLMQRVVMPEDGEIAFEKKGNLAKSGGNKWAVKEGLYPCELSAETAKMLGEAVDTACSVWGDRSLEALDAEERLSFACEKGPSEDEAILALRKVFNAIEAEYKVYTSAEKKEVLGLGGLHVVGTERHESRRVDNQLRGRSGRQGDPGSTRYFLSLEDNLFRIFGGDRIQALMSAFRVEDMPIESGMLTNSLDEAQKKVERYFYDIRKQLFDYDAVLNSQREKVYFERRRALTASREQLQEQMLEYAELTIDDIVNANIDTSEPVSEWPLEGLVGKLRQYCYYFGEIDESDIRPIAEKGGVNALRNFLVKKGQDAYMTKCGEVEATEAGLMMEAERFFILSQTDNLWKQHLQAIKFVQQAVGLRGYAQKDPLIEYKLEGFNLYTEMMAQIRRNVIYSVYMFQPQRLEQKEEAELVGAGGDQKPNSRKK</sequence>
<feature type="transit peptide" description="Chloroplast" evidence="2">
    <location>
        <begin position="1"/>
        <end status="unknown"/>
    </location>
</feature>
<feature type="chain" id="PRO_0000318483" description="Protein translocase subunit SecA, chloroplastic">
    <location>
        <begin status="unknown"/>
        <end position="932"/>
    </location>
</feature>
<feature type="region of interest" description="Disordered" evidence="3">
    <location>
        <begin position="632"/>
        <end position="653"/>
    </location>
</feature>
<feature type="compositionally biased region" description="Basic and acidic residues" evidence="3">
    <location>
        <begin position="632"/>
        <end position="641"/>
    </location>
</feature>
<feature type="binding site" evidence="2">
    <location>
        <begin position="95"/>
        <end position="102"/>
    </location>
    <ligand>
        <name>ATP</name>
        <dbReference type="ChEBI" id="CHEBI:30616"/>
    </ligand>
</feature>
<keyword id="KW-0067">ATP-binding</keyword>
<keyword id="KW-0150">Chloroplast</keyword>
<keyword id="KW-0472">Membrane</keyword>
<keyword id="KW-0547">Nucleotide-binding</keyword>
<keyword id="KW-0934">Plastid</keyword>
<keyword id="KW-0653">Protein transport</keyword>
<keyword id="KW-1185">Reference proteome</keyword>
<keyword id="KW-0793">Thylakoid</keyword>
<keyword id="KW-0809">Transit peptide</keyword>
<keyword id="KW-1278">Translocase</keyword>
<keyword id="KW-0811">Translocation</keyword>
<keyword id="KW-0813">Transport</keyword>
<protein>
    <recommendedName>
        <fullName evidence="4">Protein translocase subunit SecA, chloroplastic</fullName>
        <ecNumber evidence="1">7.4.2.4</ecNumber>
    </recommendedName>
</protein>
<name>SECA_OSTLU</name>
<dbReference type="EC" id="7.4.2.4" evidence="1"/>
<dbReference type="EMBL" id="CP000584">
    <property type="protein sequence ID" value="ABO95574.1"/>
    <property type="molecule type" value="Genomic_DNA"/>
</dbReference>
<dbReference type="RefSeq" id="XP_001417281.1">
    <property type="nucleotide sequence ID" value="XM_001417244.1"/>
</dbReference>
<dbReference type="SMR" id="A4RW83"/>
<dbReference type="STRING" id="436017.A4RW83"/>
<dbReference type="EnsemblPlants" id="ABO95574">
    <property type="protein sequence ID" value="ABO95574"/>
    <property type="gene ID" value="OSTLU_36933"/>
</dbReference>
<dbReference type="GeneID" id="5001476"/>
<dbReference type="Gramene" id="ABO95574">
    <property type="protein sequence ID" value="ABO95574"/>
    <property type="gene ID" value="OSTLU_36933"/>
</dbReference>
<dbReference type="KEGG" id="olu:OSTLU_36933"/>
<dbReference type="eggNOG" id="ENOG502QS7I">
    <property type="taxonomic scope" value="Eukaryota"/>
</dbReference>
<dbReference type="HOGENOM" id="CLU_005314_3_0_1"/>
<dbReference type="OMA" id="MVHYDVQ"/>
<dbReference type="OrthoDB" id="27934at2759"/>
<dbReference type="Proteomes" id="UP000001568">
    <property type="component" value="Chromosome 4"/>
</dbReference>
<dbReference type="GO" id="GO:0009570">
    <property type="term" value="C:chloroplast stroma"/>
    <property type="evidence" value="ECO:0007669"/>
    <property type="project" value="UniProtKB-SubCell"/>
</dbReference>
<dbReference type="GO" id="GO:0009535">
    <property type="term" value="C:chloroplast thylakoid membrane"/>
    <property type="evidence" value="ECO:0007669"/>
    <property type="project" value="UniProtKB-SubCell"/>
</dbReference>
<dbReference type="GO" id="GO:0005524">
    <property type="term" value="F:ATP binding"/>
    <property type="evidence" value="ECO:0007669"/>
    <property type="project" value="UniProtKB-KW"/>
</dbReference>
<dbReference type="GO" id="GO:0016464">
    <property type="term" value="F:chloroplast protein-transporting ATPase activity"/>
    <property type="evidence" value="ECO:0007669"/>
    <property type="project" value="UniProtKB-EC"/>
</dbReference>
<dbReference type="GO" id="GO:0009658">
    <property type="term" value="P:chloroplast organization"/>
    <property type="evidence" value="ECO:0007669"/>
    <property type="project" value="EnsemblPlants"/>
</dbReference>
<dbReference type="GO" id="GO:0006886">
    <property type="term" value="P:intracellular protein transport"/>
    <property type="evidence" value="ECO:0007669"/>
    <property type="project" value="InterPro"/>
</dbReference>
<dbReference type="GO" id="GO:0017038">
    <property type="term" value="P:protein import"/>
    <property type="evidence" value="ECO:0007669"/>
    <property type="project" value="InterPro"/>
</dbReference>
<dbReference type="GO" id="GO:0006605">
    <property type="term" value="P:protein targeting"/>
    <property type="evidence" value="ECO:0007669"/>
    <property type="project" value="InterPro"/>
</dbReference>
<dbReference type="GO" id="GO:0010109">
    <property type="term" value="P:regulation of photosynthesis"/>
    <property type="evidence" value="ECO:0007669"/>
    <property type="project" value="EnsemblPlants"/>
</dbReference>
<dbReference type="GO" id="GO:0009646">
    <property type="term" value="P:response to absence of light"/>
    <property type="evidence" value="ECO:0007669"/>
    <property type="project" value="EnsemblPlants"/>
</dbReference>
<dbReference type="GO" id="GO:0010090">
    <property type="term" value="P:trichome morphogenesis"/>
    <property type="evidence" value="ECO:0007669"/>
    <property type="project" value="EnsemblPlants"/>
</dbReference>
<dbReference type="CDD" id="cd17928">
    <property type="entry name" value="DEXDc_SecA"/>
    <property type="match status" value="1"/>
</dbReference>
<dbReference type="CDD" id="cd18803">
    <property type="entry name" value="SF2_C_secA"/>
    <property type="match status" value="1"/>
</dbReference>
<dbReference type="FunFam" id="3.90.1440.10:FF:000003">
    <property type="entry name" value="Preprotein translocase SecA subunit"/>
    <property type="match status" value="1"/>
</dbReference>
<dbReference type="FunFam" id="1.10.3060.10:FF:000003">
    <property type="entry name" value="Protein translocase subunit SecA"/>
    <property type="match status" value="1"/>
</dbReference>
<dbReference type="FunFam" id="3.40.50.300:FF:000334">
    <property type="entry name" value="Protein translocase subunit SecA"/>
    <property type="match status" value="1"/>
</dbReference>
<dbReference type="Gene3D" id="1.10.3060.10">
    <property type="entry name" value="Helical scaffold and wing domains of SecA"/>
    <property type="match status" value="1"/>
</dbReference>
<dbReference type="Gene3D" id="3.40.50.300">
    <property type="entry name" value="P-loop containing nucleotide triphosphate hydrolases"/>
    <property type="match status" value="2"/>
</dbReference>
<dbReference type="Gene3D" id="3.90.1440.10">
    <property type="entry name" value="SecA, preprotein cross-linking domain"/>
    <property type="match status" value="1"/>
</dbReference>
<dbReference type="HAMAP" id="MF_01382">
    <property type="entry name" value="SecA"/>
    <property type="match status" value="1"/>
</dbReference>
<dbReference type="InterPro" id="IPR014001">
    <property type="entry name" value="Helicase_ATP-bd"/>
</dbReference>
<dbReference type="InterPro" id="IPR027417">
    <property type="entry name" value="P-loop_NTPase"/>
</dbReference>
<dbReference type="InterPro" id="IPR000185">
    <property type="entry name" value="SecA"/>
</dbReference>
<dbReference type="InterPro" id="IPR020937">
    <property type="entry name" value="SecA_CS"/>
</dbReference>
<dbReference type="InterPro" id="IPR011115">
    <property type="entry name" value="SecA_DEAD"/>
</dbReference>
<dbReference type="InterPro" id="IPR014018">
    <property type="entry name" value="SecA_motor_DEAD"/>
</dbReference>
<dbReference type="InterPro" id="IPR011130">
    <property type="entry name" value="SecA_preprotein_X-link_dom"/>
</dbReference>
<dbReference type="InterPro" id="IPR044722">
    <property type="entry name" value="SecA_SF2_C"/>
</dbReference>
<dbReference type="InterPro" id="IPR011116">
    <property type="entry name" value="SecA_Wing/Scaffold"/>
</dbReference>
<dbReference type="InterPro" id="IPR036266">
    <property type="entry name" value="SecA_Wing/Scaffold_sf"/>
</dbReference>
<dbReference type="InterPro" id="IPR036670">
    <property type="entry name" value="SecA_X-link_sf"/>
</dbReference>
<dbReference type="NCBIfam" id="TIGR00963">
    <property type="entry name" value="secA"/>
    <property type="match status" value="1"/>
</dbReference>
<dbReference type="PANTHER" id="PTHR30612:SF0">
    <property type="entry name" value="CHLOROPLAST PROTEIN-TRANSPORTING ATPASE"/>
    <property type="match status" value="1"/>
</dbReference>
<dbReference type="PANTHER" id="PTHR30612">
    <property type="entry name" value="SECA INNER MEMBRANE COMPONENT OF SEC PROTEIN SECRETION SYSTEM"/>
    <property type="match status" value="1"/>
</dbReference>
<dbReference type="Pfam" id="PF21090">
    <property type="entry name" value="P-loop_SecA"/>
    <property type="match status" value="1"/>
</dbReference>
<dbReference type="Pfam" id="PF07517">
    <property type="entry name" value="SecA_DEAD"/>
    <property type="match status" value="1"/>
</dbReference>
<dbReference type="Pfam" id="PF01043">
    <property type="entry name" value="SecA_PP_bind"/>
    <property type="match status" value="1"/>
</dbReference>
<dbReference type="Pfam" id="PF07516">
    <property type="entry name" value="SecA_SW"/>
    <property type="match status" value="1"/>
</dbReference>
<dbReference type="PRINTS" id="PR00906">
    <property type="entry name" value="SECA"/>
</dbReference>
<dbReference type="SMART" id="SM00957">
    <property type="entry name" value="SecA_DEAD"/>
    <property type="match status" value="1"/>
</dbReference>
<dbReference type="SMART" id="SM00958">
    <property type="entry name" value="SecA_PP_bind"/>
    <property type="match status" value="1"/>
</dbReference>
<dbReference type="SUPFAM" id="SSF81886">
    <property type="entry name" value="Helical scaffold and wing domains of SecA"/>
    <property type="match status" value="1"/>
</dbReference>
<dbReference type="SUPFAM" id="SSF52540">
    <property type="entry name" value="P-loop containing nucleoside triphosphate hydrolases"/>
    <property type="match status" value="2"/>
</dbReference>
<dbReference type="SUPFAM" id="SSF81767">
    <property type="entry name" value="Pre-protein crosslinking domain of SecA"/>
    <property type="match status" value="1"/>
</dbReference>
<dbReference type="PROSITE" id="PS01312">
    <property type="entry name" value="SECA"/>
    <property type="match status" value="1"/>
</dbReference>
<dbReference type="PROSITE" id="PS51196">
    <property type="entry name" value="SECA_MOTOR_DEAD"/>
    <property type="match status" value="1"/>
</dbReference>
<comment type="function">
    <text evidence="1">Has a central role in coupling the hydrolysis of ATP to the transfer of proteins across the thylakoid membrane.</text>
</comment>
<comment type="catalytic activity">
    <reaction evidence="1">
        <text>ATP + H2O + chloroplast-proteinSide 1 = ADP + phosphate + chloroplast-proteinSide 2.</text>
        <dbReference type="EC" id="7.4.2.4"/>
    </reaction>
</comment>
<comment type="subcellular location">
    <subcellularLocation>
        <location evidence="1">Plastid</location>
        <location evidence="1">Chloroplast stroma</location>
    </subcellularLocation>
    <subcellularLocation>
        <location evidence="1">Plastid</location>
        <location evidence="1">Chloroplast thylakoid membrane</location>
        <topology evidence="4">Peripheral membrane protein</topology>
    </subcellularLocation>
    <text evidence="1">A minor fraction is associated with the chloroplast thylakoid membrane.</text>
</comment>
<comment type="similarity">
    <text evidence="4">Belongs to the SecA family.</text>
</comment>
<evidence type="ECO:0000250" key="1">
    <source>
        <dbReference type="UniProtKB" id="Q41062"/>
    </source>
</evidence>
<evidence type="ECO:0000255" key="2"/>
<evidence type="ECO:0000256" key="3">
    <source>
        <dbReference type="SAM" id="MobiDB-lite"/>
    </source>
</evidence>
<evidence type="ECO:0000305" key="4"/>
<evidence type="ECO:0000312" key="5">
    <source>
        <dbReference type="EMBL" id="ABO95574.1"/>
    </source>
</evidence>
<organism>
    <name type="scientific">Ostreococcus lucimarinus (strain CCE9901)</name>
    <dbReference type="NCBI Taxonomy" id="436017"/>
    <lineage>
        <taxon>Eukaryota</taxon>
        <taxon>Viridiplantae</taxon>
        <taxon>Chlorophyta</taxon>
        <taxon>Mamiellophyceae</taxon>
        <taxon>Mamiellales</taxon>
        <taxon>Bathycoccaceae</taxon>
        <taxon>Ostreococcus</taxon>
    </lineage>
</organism>